<comment type="function">
    <text evidence="2 5 6 8 9 10 11 13 16">Esterase; part of the gene cluster that mediates the biosynthesis of sterigmatocystin (ST), a polyketide-derived furanocoumarin which is part of the most toxic and carcinogenic compounds among the known mycotoxins (PubMed:8643646). The first step in the biosynthesis of sterigmatocystin is the production of hexanoate by the fatty acid synthase (FAS) units stcJ and stcK (PubMed:8962148). The polyketide backbone is assembled by the non-reducing polyketide synthase stcA by condensation of the starter hexanoyl-CoA and 7 malonyl-CoA extender units followed by cyclization and release of norsolorinic acid (By similarity). Norsolorinic acid is the first stable intermediate in the biosynthesis of sterigmatocystin and is converted into averantin (AVN) by the ketoreductase stcE which reduces the hexanoate ketone to an alcohol (Probable) (PubMed:8643646). Averantin is then oxidized into 5'-hydroxyaverantin (HAVN) by the cytochrome P450 monooxygenase stcF (PubMed:10618248). 5'-hydroxyaverantin is further converted to 5'-oxyaverantin (OAVN) by the 5'-hydroxyaverantin dehydrogenase stcG (PubMed:24957370). The next step is the conversion of OAVN into averufin (AVF) which is catalyzed by a yet to be identified enzyme (PubMed:24957370). The cytochrome P450 monooxygenase stcB and the flavin-binding monooxygenase stcW are both required for the conversion of averufin to 1-hydroxyversicolorone (PubMed:10618248). The esterase stcI probably catalyzes the formation of versiconal hemiacetal acetate from 1-hydroxyversicolorone (PubMed:24957370). The oxydoreductase stcN then probably catalyzes the biosynthetic step from versiconal to versicolorin B (VERB) (PubMed:24957370). The next step is performed by the versicolorin B desaturase stcL to produce versicolorin A (VERA) (PubMed:8999832). The ketoreductase stcU and the cytochrome P450 monooxygenase stcS are involved in the conversion of versicolorin A to demethylsterigmatocystin (PubMed:7486998). The Baeyer-Villiger oxidas stcQ and the reductase stcR might be involved in the biosynthetic step from versicolorin A to demethylsterigmatocystin (PubMed:24957370). The final step in the biosynthesis of sterigmatocystin is the methylation of demethylsterigmatocystin catalyzed by the methyltransferase stcP (PubMed:8900026).</text>
</comment>
<comment type="catalytic activity">
    <reaction evidence="4">
        <text>(2S,3S)-versiconal hemiacetal acetate + H2O = (2S-3S)-versiconal hemiacetal + acetate + H(+)</text>
        <dbReference type="Rhea" id="RHEA:35715"/>
        <dbReference type="ChEBI" id="CHEBI:15377"/>
        <dbReference type="ChEBI" id="CHEBI:15378"/>
        <dbReference type="ChEBI" id="CHEBI:30089"/>
        <dbReference type="ChEBI" id="CHEBI:77950"/>
        <dbReference type="ChEBI" id="CHEBI:77975"/>
        <dbReference type="EC" id="3.1.1.94"/>
    </reaction>
</comment>
<comment type="catalytic activity">
    <reaction evidence="4">
        <text>(3S)-versiconol acetate + H2O = (S)-versiconol + acetate + H(+)</text>
        <dbReference type="Rhea" id="RHEA:35719"/>
        <dbReference type="ChEBI" id="CHEBI:15377"/>
        <dbReference type="ChEBI" id="CHEBI:15378"/>
        <dbReference type="ChEBI" id="CHEBI:30089"/>
        <dbReference type="ChEBI" id="CHEBI:72673"/>
        <dbReference type="ChEBI" id="CHEBI:77947"/>
        <dbReference type="EC" id="3.1.1.94"/>
    </reaction>
</comment>
<comment type="pathway">
    <text evidence="8">Mycotoxin biosynthesis; sterigmatocystin biosynthesis.</text>
</comment>
<comment type="induction">
    <text evidence="7 8 12">The genes forming the sterigmatocystin biosynthesis cluster are co-regulated and induced on oatmeal porridge or the fungal isolates were grown either on oatmeal porridge or in YEC medium (0.2% yeast extract, 5.0% corn steep liquor) (PubMed:8017929, PubMed:8643646). Expression is positively regulated by the cluster-specific transcription factor aflR that binds the palindromic sequence 5'-TCG(N5)CGA-3'found in the promoter (PubMed:9680223).</text>
</comment>
<comment type="similarity">
    <text evidence="15">Belongs to the 'GDXG' lipolytic enzyme family.</text>
</comment>
<organism>
    <name type="scientific">Emericella nidulans (strain FGSC A4 / ATCC 38163 / CBS 112.46 / NRRL 194 / M139)</name>
    <name type="common">Aspergillus nidulans</name>
    <dbReference type="NCBI Taxonomy" id="227321"/>
    <lineage>
        <taxon>Eukaryota</taxon>
        <taxon>Fungi</taxon>
        <taxon>Dikarya</taxon>
        <taxon>Ascomycota</taxon>
        <taxon>Pezizomycotina</taxon>
        <taxon>Eurotiomycetes</taxon>
        <taxon>Eurotiomycetidae</taxon>
        <taxon>Eurotiales</taxon>
        <taxon>Aspergillaceae</taxon>
        <taxon>Aspergillus</taxon>
        <taxon>Aspergillus subgen. Nidulantes</taxon>
    </lineage>
</organism>
<name>STCI_EMENI</name>
<dbReference type="EC" id="3.1.1.94" evidence="4"/>
<dbReference type="EMBL" id="U34740">
    <property type="protein sequence ID" value="AAC49197.1"/>
    <property type="molecule type" value="Genomic_DNA"/>
</dbReference>
<dbReference type="EMBL" id="AACD01000132">
    <property type="protein sequence ID" value="EAA61604.1"/>
    <property type="molecule type" value="Genomic_DNA"/>
</dbReference>
<dbReference type="EMBL" id="BN001304">
    <property type="protein sequence ID" value="CBF80165.1"/>
    <property type="molecule type" value="Genomic_DNA"/>
</dbReference>
<dbReference type="RefSeq" id="XP_681085.1">
    <property type="nucleotide sequence ID" value="XM_675993.1"/>
</dbReference>
<dbReference type="SMR" id="Q00675"/>
<dbReference type="STRING" id="227321.Q00675"/>
<dbReference type="ESTHER" id="emeni-stci">
    <property type="family name" value="Hormone-sensitive_lipase_like"/>
</dbReference>
<dbReference type="EnsemblFungi" id="CBF80165">
    <property type="protein sequence ID" value="CBF80165"/>
    <property type="gene ID" value="ANIA_07816"/>
</dbReference>
<dbReference type="KEGG" id="ani:ANIA_07816"/>
<dbReference type="eggNOG" id="KOG1515">
    <property type="taxonomic scope" value="Eukaryota"/>
</dbReference>
<dbReference type="HOGENOM" id="CLU_012494_6_3_1"/>
<dbReference type="InParanoid" id="Q00675"/>
<dbReference type="OMA" id="PVCMYYH"/>
<dbReference type="OrthoDB" id="408631at2759"/>
<dbReference type="UniPathway" id="UPA00377"/>
<dbReference type="Proteomes" id="UP000000560">
    <property type="component" value="Chromosome IV"/>
</dbReference>
<dbReference type="GO" id="GO:0052689">
    <property type="term" value="F:carboxylic ester hydrolase activity"/>
    <property type="evidence" value="ECO:0007669"/>
    <property type="project" value="UniProtKB-KW"/>
</dbReference>
<dbReference type="GO" id="GO:0045461">
    <property type="term" value="P:sterigmatocystin biosynthetic process"/>
    <property type="evidence" value="ECO:0000270"/>
    <property type="project" value="GO_Central"/>
</dbReference>
<dbReference type="Gene3D" id="3.40.50.1820">
    <property type="entry name" value="alpha/beta hydrolase"/>
    <property type="match status" value="1"/>
</dbReference>
<dbReference type="InterPro" id="IPR013094">
    <property type="entry name" value="AB_hydrolase_3"/>
</dbReference>
<dbReference type="InterPro" id="IPR029058">
    <property type="entry name" value="AB_hydrolase_fold"/>
</dbReference>
<dbReference type="InterPro" id="IPR050300">
    <property type="entry name" value="GDXG_lipolytic_enzyme"/>
</dbReference>
<dbReference type="PANTHER" id="PTHR48081">
    <property type="entry name" value="AB HYDROLASE SUPERFAMILY PROTEIN C4A8.06C"/>
    <property type="match status" value="1"/>
</dbReference>
<dbReference type="PANTHER" id="PTHR48081:SF8">
    <property type="entry name" value="ALPHA_BETA HYDROLASE FOLD-3 DOMAIN-CONTAINING PROTEIN-RELATED"/>
    <property type="match status" value="1"/>
</dbReference>
<dbReference type="Pfam" id="PF07859">
    <property type="entry name" value="Abhydrolase_3"/>
    <property type="match status" value="1"/>
</dbReference>
<dbReference type="SUPFAM" id="SSF53474">
    <property type="entry name" value="alpha/beta-Hydrolases"/>
    <property type="match status" value="1"/>
</dbReference>
<evidence type="ECO:0000250" key="1">
    <source>
        <dbReference type="UniProtKB" id="P23872"/>
    </source>
</evidence>
<evidence type="ECO:0000250" key="2">
    <source>
        <dbReference type="UniProtKB" id="Q12053"/>
    </source>
</evidence>
<evidence type="ECO:0000250" key="3">
    <source>
        <dbReference type="UniProtKB" id="Q5NUF3"/>
    </source>
</evidence>
<evidence type="ECO:0000250" key="4">
    <source>
        <dbReference type="UniProtKB" id="Q6UEG5"/>
    </source>
</evidence>
<evidence type="ECO:0000269" key="5">
    <source>
    </source>
</evidence>
<evidence type="ECO:0000269" key="6">
    <source>
    </source>
</evidence>
<evidence type="ECO:0000269" key="7">
    <source>
    </source>
</evidence>
<evidence type="ECO:0000269" key="8">
    <source>
    </source>
</evidence>
<evidence type="ECO:0000269" key="9">
    <source>
    </source>
</evidence>
<evidence type="ECO:0000269" key="10">
    <source>
    </source>
</evidence>
<evidence type="ECO:0000269" key="11">
    <source>
    </source>
</evidence>
<evidence type="ECO:0000269" key="12">
    <source>
    </source>
</evidence>
<evidence type="ECO:0000303" key="13">
    <source>
    </source>
</evidence>
<evidence type="ECO:0000303" key="14">
    <source>
    </source>
</evidence>
<evidence type="ECO:0000305" key="15"/>
<evidence type="ECO:0000305" key="16">
    <source>
    </source>
</evidence>
<proteinExistence type="evidence at transcript level"/>
<accession>Q00675</accession>
<accession>C8VDT9</accession>
<accession>Q5AV64</accession>
<keyword id="KW-0378">Hydrolase</keyword>
<keyword id="KW-1185">Reference proteome</keyword>
<keyword id="KW-0719">Serine esterase</keyword>
<keyword id="KW-0843">Virulence</keyword>
<sequence length="286" mass="31456">MQGWKTIVGKLMSRYDFPLPDLSVQAEDKILGGVPTRIYTPPDVADPPLALYFHAGGWVMGSIDEEDGFVRTLCKLARTRIFSVGYRLAPEFRFPMALDDCLTVARSVLETYPVQSICFIGASAGGNMAFSTALTLVSDGLGDRVQGVVALAPVTVHPDSVSADNRDRGEYTSYEENDRLTINTGSAMRSFFDCYGAPPDDPRLSCLLHPGLGKLNKVYMAVGDADTLRDDVRLMRDALVALEVPVKCDEYPGYPHFSWLFPSPALREHQALFFGNLLSGICWVCE</sequence>
<feature type="chain" id="PRO_0000071561" description="Versiconal hemiacetal acetate esterase stcI">
    <location>
        <begin position="1"/>
        <end position="286"/>
    </location>
</feature>
<feature type="short sequence motif" description="Involved in the stabilization of the negatively charged intermediate by the formation of the oxyanion hole" evidence="3">
    <location>
        <begin position="54"/>
        <end position="56"/>
    </location>
</feature>
<feature type="active site" evidence="1">
    <location>
        <position position="123"/>
    </location>
</feature>
<feature type="active site" evidence="1">
    <location>
        <position position="226"/>
    </location>
</feature>
<feature type="active site" evidence="1">
    <location>
        <position position="256"/>
    </location>
</feature>
<protein>
    <recommendedName>
        <fullName evidence="14">Versiconal hemiacetal acetate esterase stcI</fullName>
        <ecNumber evidence="4">3.1.1.94</ecNumber>
    </recommendedName>
    <alternativeName>
        <fullName evidence="14">Sterigmatocystin biosynthesis cluster protein I</fullName>
    </alternativeName>
</protein>
<reference key="1">
    <citation type="journal article" date="1996" name="Proc. Natl. Acad. Sci. U.S.A.">
        <title>Twenty-five coregulated transcripts define a sterigmatocystin gene cluster in Aspergillus nidulans.</title>
        <authorList>
            <person name="Brown D.W."/>
            <person name="Yu J.-H."/>
            <person name="Kelkar H.S."/>
            <person name="Fernandes M."/>
            <person name="Nesbitt T.C."/>
            <person name="Keller N.P."/>
            <person name="Adams T.H."/>
            <person name="Leonard T.J."/>
        </authorList>
    </citation>
    <scope>NUCLEOTIDE SEQUENCE [GENOMIC DNA]</scope>
    <scope>INDUCTION</scope>
    <scope>FUNCTION</scope>
    <scope>PATHWAY</scope>
    <source>
        <strain>FGSC 26</strain>
    </source>
</reference>
<reference key="2">
    <citation type="journal article" date="2005" name="Nature">
        <title>Sequencing of Aspergillus nidulans and comparative analysis with A. fumigatus and A. oryzae.</title>
        <authorList>
            <person name="Galagan J.E."/>
            <person name="Calvo S.E."/>
            <person name="Cuomo C."/>
            <person name="Ma L.-J."/>
            <person name="Wortman J.R."/>
            <person name="Batzoglou S."/>
            <person name="Lee S.-I."/>
            <person name="Bastuerkmen M."/>
            <person name="Spevak C.C."/>
            <person name="Clutterbuck J."/>
            <person name="Kapitonov V."/>
            <person name="Jurka J."/>
            <person name="Scazzocchio C."/>
            <person name="Farman M.L."/>
            <person name="Butler J."/>
            <person name="Purcell S."/>
            <person name="Harris S."/>
            <person name="Braus G.H."/>
            <person name="Draht O."/>
            <person name="Busch S."/>
            <person name="D'Enfert C."/>
            <person name="Bouchier C."/>
            <person name="Goldman G.H."/>
            <person name="Bell-Pedersen D."/>
            <person name="Griffiths-Jones S."/>
            <person name="Doonan J.H."/>
            <person name="Yu J."/>
            <person name="Vienken K."/>
            <person name="Pain A."/>
            <person name="Freitag M."/>
            <person name="Selker E.U."/>
            <person name="Archer D.B."/>
            <person name="Penalva M.A."/>
            <person name="Oakley B.R."/>
            <person name="Momany M."/>
            <person name="Tanaka T."/>
            <person name="Kumagai T."/>
            <person name="Asai K."/>
            <person name="Machida M."/>
            <person name="Nierman W.C."/>
            <person name="Denning D.W."/>
            <person name="Caddick M.X."/>
            <person name="Hynes M."/>
            <person name="Paoletti M."/>
            <person name="Fischer R."/>
            <person name="Miller B.L."/>
            <person name="Dyer P.S."/>
            <person name="Sachs M.S."/>
            <person name="Osmani S.A."/>
            <person name="Birren B.W."/>
        </authorList>
    </citation>
    <scope>NUCLEOTIDE SEQUENCE [LARGE SCALE GENOMIC DNA]</scope>
    <source>
        <strain>FGSC A4 / ATCC 38163 / CBS 112.46 / NRRL 194 / M139</strain>
    </source>
</reference>
<reference key="3">
    <citation type="journal article" date="2009" name="Fungal Genet. Biol.">
        <title>The 2008 update of the Aspergillus nidulans genome annotation: a community effort.</title>
        <authorList>
            <person name="Wortman J.R."/>
            <person name="Gilsenan J.M."/>
            <person name="Joardar V."/>
            <person name="Deegan J."/>
            <person name="Clutterbuck J."/>
            <person name="Andersen M.R."/>
            <person name="Archer D."/>
            <person name="Bencina M."/>
            <person name="Braus G."/>
            <person name="Coutinho P."/>
            <person name="von Dohren H."/>
            <person name="Doonan J."/>
            <person name="Driessen A.J."/>
            <person name="Durek P."/>
            <person name="Espeso E."/>
            <person name="Fekete E."/>
            <person name="Flipphi M."/>
            <person name="Estrada C.G."/>
            <person name="Geysens S."/>
            <person name="Goldman G."/>
            <person name="de Groot P.W."/>
            <person name="Hansen K."/>
            <person name="Harris S.D."/>
            <person name="Heinekamp T."/>
            <person name="Helmstaedt K."/>
            <person name="Henrissat B."/>
            <person name="Hofmann G."/>
            <person name="Homan T."/>
            <person name="Horio T."/>
            <person name="Horiuchi H."/>
            <person name="James S."/>
            <person name="Jones M."/>
            <person name="Karaffa L."/>
            <person name="Karanyi Z."/>
            <person name="Kato M."/>
            <person name="Keller N."/>
            <person name="Kelly D.E."/>
            <person name="Kiel J.A."/>
            <person name="Kim J.M."/>
            <person name="van der Klei I.J."/>
            <person name="Klis F.M."/>
            <person name="Kovalchuk A."/>
            <person name="Krasevec N."/>
            <person name="Kubicek C.P."/>
            <person name="Liu B."/>
            <person name="Maccabe A."/>
            <person name="Meyer V."/>
            <person name="Mirabito P."/>
            <person name="Miskei M."/>
            <person name="Mos M."/>
            <person name="Mullins J."/>
            <person name="Nelson D.R."/>
            <person name="Nielsen J."/>
            <person name="Oakley B.R."/>
            <person name="Osmani S.A."/>
            <person name="Pakula T."/>
            <person name="Paszewski A."/>
            <person name="Paulsen I."/>
            <person name="Pilsyk S."/>
            <person name="Pocsi I."/>
            <person name="Punt P.J."/>
            <person name="Ram A.F."/>
            <person name="Ren Q."/>
            <person name="Robellet X."/>
            <person name="Robson G."/>
            <person name="Seiboth B."/>
            <person name="van Solingen P."/>
            <person name="Specht T."/>
            <person name="Sun J."/>
            <person name="Taheri-Talesh N."/>
            <person name="Takeshita N."/>
            <person name="Ussery D."/>
            <person name="vanKuyk P.A."/>
            <person name="Visser H."/>
            <person name="van de Vondervoort P.J."/>
            <person name="de Vries R.P."/>
            <person name="Walton J."/>
            <person name="Xiang X."/>
            <person name="Xiong Y."/>
            <person name="Zeng A.P."/>
            <person name="Brandt B.W."/>
            <person name="Cornell M.J."/>
            <person name="van den Hondel C.A."/>
            <person name="Visser J."/>
            <person name="Oliver S.G."/>
            <person name="Turner G."/>
        </authorList>
    </citation>
    <scope>GENOME REANNOTATION</scope>
    <source>
        <strain>FGSC A4 / ATCC 38163 / CBS 112.46 / NRRL 194 / M139</strain>
    </source>
</reference>
<reference key="4">
    <citation type="journal article" date="1994" name="Appl. Environ. Microbiol.">
        <title>Aspergillus nidulans verA is required for production of the mycotoxin sterigmatocystin.</title>
        <authorList>
            <person name="Keller N.P."/>
            <person name="Kantz N.J."/>
            <person name="Adams T.H."/>
        </authorList>
    </citation>
    <scope>FUNCTION</scope>
    <scope>INDUCTION</scope>
</reference>
<reference key="5">
    <citation type="journal article" date="1995" name="Appl. Environ. Microbiol.">
        <title>StcS, a putative P-450 monooxygenase, is required for the conversion of versicolorin A to sterigmatocystin in Aspergillus nidulans.</title>
        <authorList>
            <person name="Keller N.P."/>
            <person name="Segner S."/>
            <person name="Bhatnagar D."/>
            <person name="Adams T.H."/>
        </authorList>
    </citation>
    <scope>FUNCTION</scope>
</reference>
<reference key="6">
    <citation type="journal article" date="1995" name="J. Bacteriol.">
        <title>Sterigmatocystin biosynthesis in Aspergillus nidulans requires a novel type I polyketide synthase.</title>
        <authorList>
            <person name="Yu J.-H."/>
            <person name="Leonard T.J."/>
        </authorList>
    </citation>
    <scope>FUNCTION</scope>
    <source>
        <strain>FGSC A4 / ATCC 38163 / CBS 112.46 / NRRL 194 / M139</strain>
    </source>
</reference>
<reference key="7">
    <citation type="journal article" date="1996" name="Appl. Environ. Microbiol.">
        <title>Aspergillus nidulans stcP encodes an O-methyltransferase that is required for sterigmatocystin biosynthesis.</title>
        <authorList>
            <person name="Kelkar H.S."/>
            <person name="Keller N.P."/>
            <person name="Adams T.H."/>
        </authorList>
    </citation>
    <scope>FUNCTION</scope>
</reference>
<reference key="8">
    <citation type="journal article" date="1996" name="Proc. Natl. Acad. Sci. U.S.A.">
        <title>Aspergillus has distinct fatty acid synthases for primary and secondary metabolism.</title>
        <authorList>
            <person name="Brown D.W."/>
            <person name="Adams T.H."/>
            <person name="Keller N.P."/>
        </authorList>
    </citation>
    <scope>FUNCTION</scope>
</reference>
<reference key="9">
    <citation type="journal article" date="1997" name="J. Biol. Chem.">
        <title>Aspergillus nidulans stcL encodes a putative cytochrome P-450 monooxygenase required for bisfuran desaturation during aflatoxin/sterigmatocystin biosynthesis.</title>
        <authorList>
            <person name="Kelkar H.S."/>
            <person name="Skloss T.W."/>
            <person name="Haw J.F."/>
            <person name="Keller N.P."/>
            <person name="Adams T.H."/>
        </authorList>
    </citation>
    <scope>FUNCTION</scope>
</reference>
<reference key="10">
    <citation type="journal article" date="1998" name="Mol. Microbiol.">
        <title>Sequence-specific binding by Aspergillus nidulans aflR, a C6 zinc cluster protein regulating mycotoxin biosynthesis.</title>
        <authorList>
            <person name="Fernandes M."/>
            <person name="Keller N.P."/>
            <person name="Adams T.H."/>
        </authorList>
    </citation>
    <scope>INDUCTION</scope>
</reference>
<reference key="11">
    <citation type="journal article" date="2000" name="Appl. Environ. Microbiol.">
        <title>Requirement of monooxygenase-mediated steps for sterigmatocystin biosynthesis by Aspergillus nidulans.</title>
        <authorList>
            <person name="Keller N.P."/>
            <person name="Watanabe C.M."/>
            <person name="Kelkar H.S."/>
            <person name="Adams T.H."/>
            <person name="Townsend C.A."/>
        </authorList>
    </citation>
    <scope>FUNCTION</scope>
</reference>
<reference key="12">
    <citation type="journal article" date="2012" name="Metabolites">
        <title>Genetics of polyketide metabolism in Aspergillus nidulans.</title>
        <authorList>
            <person name="Klejnstrup M.L."/>
            <person name="Frandsen R.J."/>
            <person name="Holm D.K."/>
            <person name="Nielsen M.T."/>
            <person name="Mortensen U.H."/>
            <person name="Larsen T.O."/>
            <person name="Nielsen J.B."/>
        </authorList>
    </citation>
    <scope>REVIEW ON STERIGMATOCYSTIN BIOSYNTHESIS</scope>
</reference>
<gene>
    <name evidence="14" type="primary">stcI</name>
    <name type="ORF">AN7816</name>
</gene>